<sequence length="221" mass="23451">MRTLTVYHLGHIDYTAAWEMQRRLARQRSSGQIGDTLLLLEHPPTITLGNKARPEHIVATPAELAARGVVVVQSDRGGEVTYHAPGQLVAYPIFKLSQHGSDVGRYVRGLEESVIRVLAGYGITGERVNGLTGVWVRGGAAKICAIGVKLSASGVTTHGLALNVDPDLSGFELIVPCGISDRGVTSLAVELGKAPPMAEVADRLIASLCAIFDLRPVNALS</sequence>
<proteinExistence type="inferred from homology"/>
<dbReference type="EC" id="2.3.1.181" evidence="1"/>
<dbReference type="EMBL" id="CP001337">
    <property type="protein sequence ID" value="ACL24040.1"/>
    <property type="molecule type" value="Genomic_DNA"/>
</dbReference>
<dbReference type="RefSeq" id="WP_012616404.1">
    <property type="nucleotide sequence ID" value="NC_011831.1"/>
</dbReference>
<dbReference type="SMR" id="B8G783"/>
<dbReference type="STRING" id="326427.Cagg_1130"/>
<dbReference type="KEGG" id="cag:Cagg_1130"/>
<dbReference type="eggNOG" id="COG0321">
    <property type="taxonomic scope" value="Bacteria"/>
</dbReference>
<dbReference type="HOGENOM" id="CLU_035168_1_3_0"/>
<dbReference type="OrthoDB" id="9787061at2"/>
<dbReference type="UniPathway" id="UPA00538">
    <property type="reaction ID" value="UER00592"/>
</dbReference>
<dbReference type="Proteomes" id="UP000002508">
    <property type="component" value="Chromosome"/>
</dbReference>
<dbReference type="GO" id="GO:0005737">
    <property type="term" value="C:cytoplasm"/>
    <property type="evidence" value="ECO:0007669"/>
    <property type="project" value="UniProtKB-SubCell"/>
</dbReference>
<dbReference type="GO" id="GO:0033819">
    <property type="term" value="F:lipoyl(octanoyl) transferase activity"/>
    <property type="evidence" value="ECO:0007669"/>
    <property type="project" value="UniProtKB-EC"/>
</dbReference>
<dbReference type="GO" id="GO:0036211">
    <property type="term" value="P:protein modification process"/>
    <property type="evidence" value="ECO:0007669"/>
    <property type="project" value="InterPro"/>
</dbReference>
<dbReference type="CDD" id="cd16444">
    <property type="entry name" value="LipB"/>
    <property type="match status" value="1"/>
</dbReference>
<dbReference type="FunFam" id="3.30.930.10:FF:000189">
    <property type="entry name" value="Octanoyltransferase"/>
    <property type="match status" value="1"/>
</dbReference>
<dbReference type="Gene3D" id="3.30.930.10">
    <property type="entry name" value="Bira Bifunctional Protein, Domain 2"/>
    <property type="match status" value="1"/>
</dbReference>
<dbReference type="HAMAP" id="MF_00013">
    <property type="entry name" value="LipB"/>
    <property type="match status" value="1"/>
</dbReference>
<dbReference type="InterPro" id="IPR045864">
    <property type="entry name" value="aa-tRNA-synth_II/BPL/LPL"/>
</dbReference>
<dbReference type="InterPro" id="IPR004143">
    <property type="entry name" value="BPL_LPL_catalytic"/>
</dbReference>
<dbReference type="InterPro" id="IPR000544">
    <property type="entry name" value="Octanoyltransferase"/>
</dbReference>
<dbReference type="InterPro" id="IPR020605">
    <property type="entry name" value="Octanoyltransferase_CS"/>
</dbReference>
<dbReference type="NCBIfam" id="TIGR00214">
    <property type="entry name" value="lipB"/>
    <property type="match status" value="1"/>
</dbReference>
<dbReference type="NCBIfam" id="NF010925">
    <property type="entry name" value="PRK14345.1"/>
    <property type="match status" value="1"/>
</dbReference>
<dbReference type="PANTHER" id="PTHR10993:SF7">
    <property type="entry name" value="LIPOYLTRANSFERASE 2, MITOCHONDRIAL-RELATED"/>
    <property type="match status" value="1"/>
</dbReference>
<dbReference type="PANTHER" id="PTHR10993">
    <property type="entry name" value="OCTANOYLTRANSFERASE"/>
    <property type="match status" value="1"/>
</dbReference>
<dbReference type="Pfam" id="PF21948">
    <property type="entry name" value="LplA-B_cat"/>
    <property type="match status" value="1"/>
</dbReference>
<dbReference type="PIRSF" id="PIRSF016262">
    <property type="entry name" value="LPLase"/>
    <property type="match status" value="1"/>
</dbReference>
<dbReference type="SUPFAM" id="SSF55681">
    <property type="entry name" value="Class II aaRS and biotin synthetases"/>
    <property type="match status" value="1"/>
</dbReference>
<dbReference type="PROSITE" id="PS51733">
    <property type="entry name" value="BPL_LPL_CATALYTIC"/>
    <property type="match status" value="1"/>
</dbReference>
<dbReference type="PROSITE" id="PS01313">
    <property type="entry name" value="LIPB"/>
    <property type="match status" value="1"/>
</dbReference>
<protein>
    <recommendedName>
        <fullName evidence="1">Octanoyltransferase</fullName>
        <ecNumber evidence="1">2.3.1.181</ecNumber>
    </recommendedName>
    <alternativeName>
        <fullName evidence="1">Lipoate-protein ligase B</fullName>
    </alternativeName>
    <alternativeName>
        <fullName evidence="1">Lipoyl/octanoyl transferase</fullName>
    </alternativeName>
    <alternativeName>
        <fullName evidence="1">Octanoyl-[acyl-carrier-protein]-protein N-octanoyltransferase</fullName>
    </alternativeName>
</protein>
<accession>B8G783</accession>
<organism>
    <name type="scientific">Chloroflexus aggregans (strain MD-66 / DSM 9485)</name>
    <dbReference type="NCBI Taxonomy" id="326427"/>
    <lineage>
        <taxon>Bacteria</taxon>
        <taxon>Bacillati</taxon>
        <taxon>Chloroflexota</taxon>
        <taxon>Chloroflexia</taxon>
        <taxon>Chloroflexales</taxon>
        <taxon>Chloroflexineae</taxon>
        <taxon>Chloroflexaceae</taxon>
        <taxon>Chloroflexus</taxon>
    </lineage>
</organism>
<gene>
    <name evidence="1" type="primary">lipB</name>
    <name type="ordered locus">Cagg_1130</name>
</gene>
<keyword id="KW-0012">Acyltransferase</keyword>
<keyword id="KW-0963">Cytoplasm</keyword>
<keyword id="KW-0808">Transferase</keyword>
<reference key="1">
    <citation type="submission" date="2008-12" db="EMBL/GenBank/DDBJ databases">
        <title>Complete sequence of Chloroflexus aggregans DSM 9485.</title>
        <authorList>
            <consortium name="US DOE Joint Genome Institute"/>
            <person name="Lucas S."/>
            <person name="Copeland A."/>
            <person name="Lapidus A."/>
            <person name="Glavina del Rio T."/>
            <person name="Dalin E."/>
            <person name="Tice H."/>
            <person name="Pitluck S."/>
            <person name="Foster B."/>
            <person name="Larimer F."/>
            <person name="Land M."/>
            <person name="Hauser L."/>
            <person name="Kyrpides N."/>
            <person name="Mikhailova N."/>
            <person name="Bryant D.A."/>
            <person name="Richardson P."/>
        </authorList>
    </citation>
    <scope>NUCLEOTIDE SEQUENCE [LARGE SCALE GENOMIC DNA]</scope>
    <source>
        <strain>MD-66 / DSM 9485</strain>
    </source>
</reference>
<comment type="function">
    <text evidence="1">Catalyzes the transfer of endogenously produced octanoic acid from octanoyl-acyl-carrier-protein onto the lipoyl domains of lipoate-dependent enzymes. Lipoyl-ACP can also act as a substrate although octanoyl-ACP is likely to be the physiological substrate.</text>
</comment>
<comment type="catalytic activity">
    <reaction evidence="1">
        <text>octanoyl-[ACP] + L-lysyl-[protein] = N(6)-octanoyl-L-lysyl-[protein] + holo-[ACP] + H(+)</text>
        <dbReference type="Rhea" id="RHEA:17665"/>
        <dbReference type="Rhea" id="RHEA-COMP:9636"/>
        <dbReference type="Rhea" id="RHEA-COMP:9685"/>
        <dbReference type="Rhea" id="RHEA-COMP:9752"/>
        <dbReference type="Rhea" id="RHEA-COMP:9928"/>
        <dbReference type="ChEBI" id="CHEBI:15378"/>
        <dbReference type="ChEBI" id="CHEBI:29969"/>
        <dbReference type="ChEBI" id="CHEBI:64479"/>
        <dbReference type="ChEBI" id="CHEBI:78463"/>
        <dbReference type="ChEBI" id="CHEBI:78809"/>
        <dbReference type="EC" id="2.3.1.181"/>
    </reaction>
</comment>
<comment type="pathway">
    <text evidence="1">Protein modification; protein lipoylation via endogenous pathway; protein N(6)-(lipoyl)lysine from octanoyl-[acyl-carrier-protein]: step 1/2.</text>
</comment>
<comment type="subcellular location">
    <subcellularLocation>
        <location evidence="1">Cytoplasm</location>
    </subcellularLocation>
</comment>
<comment type="miscellaneous">
    <text evidence="1">In the reaction, the free carboxyl group of octanoic acid is attached via an amide linkage to the epsilon-amino group of a specific lysine residue of lipoyl domains of lipoate-dependent enzymes.</text>
</comment>
<comment type="similarity">
    <text evidence="1">Belongs to the LipB family.</text>
</comment>
<name>LIPB_CHLAD</name>
<evidence type="ECO:0000255" key="1">
    <source>
        <dbReference type="HAMAP-Rule" id="MF_00013"/>
    </source>
</evidence>
<evidence type="ECO:0000255" key="2">
    <source>
        <dbReference type="PROSITE-ProRule" id="PRU01067"/>
    </source>
</evidence>
<feature type="chain" id="PRO_1000116540" description="Octanoyltransferase">
    <location>
        <begin position="1"/>
        <end position="221"/>
    </location>
</feature>
<feature type="domain" description="BPL/LPL catalytic" evidence="2">
    <location>
        <begin position="31"/>
        <end position="216"/>
    </location>
</feature>
<feature type="active site" description="Acyl-thioester intermediate" evidence="1">
    <location>
        <position position="177"/>
    </location>
</feature>
<feature type="binding site" evidence="1">
    <location>
        <begin position="76"/>
        <end position="83"/>
    </location>
    <ligand>
        <name>substrate</name>
    </ligand>
</feature>
<feature type="binding site" evidence="1">
    <location>
        <begin position="145"/>
        <end position="147"/>
    </location>
    <ligand>
        <name>substrate</name>
    </ligand>
</feature>
<feature type="binding site" evidence="1">
    <location>
        <begin position="159"/>
        <end position="161"/>
    </location>
    <ligand>
        <name>substrate</name>
    </ligand>
</feature>
<feature type="site" description="Lowers pKa of active site Cys" evidence="1">
    <location>
        <position position="142"/>
    </location>
</feature>